<protein>
    <recommendedName>
        <fullName evidence="5 6">Dynein regulatory complex protein 9</fullName>
    </recommendedName>
    <alternativeName>
        <fullName>Flagellar associated protein 122</fullName>
    </alternativeName>
</protein>
<organism>
    <name type="scientific">Chlamydomonas reinhardtii</name>
    <name type="common">Chlamydomonas smithii</name>
    <dbReference type="NCBI Taxonomy" id="3055"/>
    <lineage>
        <taxon>Eukaryota</taxon>
        <taxon>Viridiplantae</taxon>
        <taxon>Chlorophyta</taxon>
        <taxon>core chlorophytes</taxon>
        <taxon>Chlorophyceae</taxon>
        <taxon>CS clade</taxon>
        <taxon>Chlamydomonadales</taxon>
        <taxon>Chlamydomonadaceae</taxon>
        <taxon>Chlamydomonas</taxon>
    </lineage>
</organism>
<feature type="chain" id="PRO_0000444019" description="Dynein regulatory complex protein 9">
    <location>
        <begin position="1"/>
        <end position="373"/>
    </location>
</feature>
<feature type="domain" description="IQ" evidence="2">
    <location>
        <begin position="336"/>
        <end position="365"/>
    </location>
</feature>
<feature type="coiled-coil region" evidence="1">
    <location>
        <begin position="145"/>
        <end position="200"/>
    </location>
</feature>
<gene>
    <name evidence="5 6" type="primary">DRC9</name>
    <name type="synonym">FAP122</name>
    <name type="ORF">CHLREDRAFT_146448</name>
</gene>
<name>DRC9_CHLRE</name>
<proteinExistence type="evidence at protein level"/>
<sequence length="373" mass="42618">MVGIDTGGKIPPEIMRQATEKTAQLAPLEGGHIYSILKQTLEKLALVGQLQVDPKVQAHELTQSVGEEISRMITEQKKLESRFEELVALQHVLRHQPNKTKLMENQVASERQALQLLLSNCLNEIEVFGKVQPLVESVMAQQAAEQAMKETIEREKNTTAAVRQLRNDLREEKLDHEEKMKEKKKGLSTLKEQLKALKMDTAVSTRYLSKDLTAGNEHERRLQRTQLEDLLKDLGLVQQQIDIEKAVHATQAEFLRQIAAKMADDSSNWASRHDGDLAAREKELEMLKQQHARDLIELKKAEEKFKMEQALKKEREMKATEERERAEFEEMRETRRAQAAVIIQAWWRGHKVRMVMSGGGKKGAKKGGAKKKK</sequence>
<dbReference type="EMBL" id="DS496108">
    <property type="protein sequence ID" value="EDP09736.1"/>
    <property type="molecule type" value="Genomic_DNA"/>
</dbReference>
<dbReference type="RefSeq" id="XP_001689998.1">
    <property type="nucleotide sequence ID" value="XM_001689946.1"/>
</dbReference>
<dbReference type="SMR" id="A8HQ54"/>
<dbReference type="PaxDb" id="3055-EDP09736"/>
<dbReference type="eggNOG" id="ENOG502QQR7">
    <property type="taxonomic scope" value="Eukaryota"/>
</dbReference>
<dbReference type="HOGENOM" id="CLU_742615_0_0_1"/>
<dbReference type="GO" id="GO:0005930">
    <property type="term" value="C:axoneme"/>
    <property type="evidence" value="ECO:0000314"/>
    <property type="project" value="UniProtKB"/>
</dbReference>
<dbReference type="GO" id="GO:0031514">
    <property type="term" value="C:motile cilium"/>
    <property type="evidence" value="ECO:0007669"/>
    <property type="project" value="UniProtKB-KW"/>
</dbReference>
<dbReference type="CDD" id="cd23767">
    <property type="entry name" value="IQCD"/>
    <property type="match status" value="1"/>
</dbReference>
<dbReference type="InterPro" id="IPR000048">
    <property type="entry name" value="IQ_motif_EF-hand-BS"/>
</dbReference>
<dbReference type="InterPro" id="IPR042618">
    <property type="entry name" value="IQCG"/>
</dbReference>
<dbReference type="PANTHER" id="PTHR14871">
    <property type="entry name" value="DYNEIN REGULATORY COMPLEX PROTEIN 9"/>
    <property type="match status" value="1"/>
</dbReference>
<dbReference type="PANTHER" id="PTHR14871:SF1">
    <property type="entry name" value="DYNEIN REGULATORY COMPLEX PROTEIN 9"/>
    <property type="match status" value="1"/>
</dbReference>
<dbReference type="Pfam" id="PF00612">
    <property type="entry name" value="IQ"/>
    <property type="match status" value="1"/>
</dbReference>
<dbReference type="PROSITE" id="PS50096">
    <property type="entry name" value="IQ"/>
    <property type="match status" value="1"/>
</dbReference>
<comment type="function">
    <text evidence="3 4">Component of the nexin-dynein regulatory complex (N-DRC), a key regulator of ciliary/flagellar motility which maintains the alignment and integrity of the distal axoneme and regulates microtubule sliding in motile axonemes (PubMed:23427265, PubMed:25411337).</text>
</comment>
<comment type="subunit">
    <text evidence="3 4">Component of the nexin-dynein regulatory complex (N-DRC) (PubMed:23427265, PubMed:25411337).</text>
</comment>
<comment type="subcellular location">
    <subcellularLocation>
        <location evidence="3 4">Cytoplasm</location>
        <location evidence="3 4">Cytoskeleton</location>
        <location evidence="3 4">Flagellum axoneme</location>
    </subcellularLocation>
</comment>
<comment type="similarity">
    <text evidence="7">Belongs to the DRC9 family.</text>
</comment>
<evidence type="ECO:0000255" key="1"/>
<evidence type="ECO:0000255" key="2">
    <source>
        <dbReference type="PROSITE-ProRule" id="PRU00116"/>
    </source>
</evidence>
<evidence type="ECO:0000269" key="3">
    <source>
    </source>
</evidence>
<evidence type="ECO:0000269" key="4">
    <source>
    </source>
</evidence>
<evidence type="ECO:0000303" key="5">
    <source>
    </source>
</evidence>
<evidence type="ECO:0000303" key="6">
    <source>
    </source>
</evidence>
<evidence type="ECO:0000305" key="7"/>
<keyword id="KW-0966">Cell projection</keyword>
<keyword id="KW-0969">Cilium</keyword>
<keyword id="KW-0175">Coiled coil</keyword>
<keyword id="KW-0963">Cytoplasm</keyword>
<keyword id="KW-0206">Cytoskeleton</keyword>
<keyword id="KW-0282">Flagellum</keyword>
<reference key="1">
    <citation type="journal article" date="2007" name="Science">
        <title>The Chlamydomonas genome reveals the evolution of key animal and plant functions.</title>
        <authorList>
            <person name="Merchant S.S."/>
            <person name="Prochnik S.E."/>
            <person name="Vallon O."/>
            <person name="Harris E.H."/>
            <person name="Karpowicz S.J."/>
            <person name="Witman G.B."/>
            <person name="Terry A."/>
            <person name="Salamov A."/>
            <person name="Fritz-Laylin L.K."/>
            <person name="Marechal-Drouard L."/>
            <person name="Marshall W.F."/>
            <person name="Qu L.H."/>
            <person name="Nelson D.R."/>
            <person name="Sanderfoot A.A."/>
            <person name="Spalding M.H."/>
            <person name="Kapitonov V.V."/>
            <person name="Ren Q."/>
            <person name="Ferris P."/>
            <person name="Lindquist E."/>
            <person name="Shapiro H."/>
            <person name="Lucas S.M."/>
            <person name="Grimwood J."/>
            <person name="Schmutz J."/>
            <person name="Cardol P."/>
            <person name="Cerutti H."/>
            <person name="Chanfreau G."/>
            <person name="Chen C.L."/>
            <person name="Cognat V."/>
            <person name="Croft M.T."/>
            <person name="Dent R."/>
            <person name="Dutcher S."/>
            <person name="Fernandez E."/>
            <person name="Fukuzawa H."/>
            <person name="Gonzalez-Ballester D."/>
            <person name="Gonzalez-Halphen D."/>
            <person name="Hallmann A."/>
            <person name="Hanikenne M."/>
            <person name="Hippler M."/>
            <person name="Inwood W."/>
            <person name="Jabbari K."/>
            <person name="Kalanon M."/>
            <person name="Kuras R."/>
            <person name="Lefebvre P.A."/>
            <person name="Lemaire S.D."/>
            <person name="Lobanov A.V."/>
            <person name="Lohr M."/>
            <person name="Manuell A."/>
            <person name="Meier I."/>
            <person name="Mets L."/>
            <person name="Mittag M."/>
            <person name="Mittelmeier T."/>
            <person name="Moroney J.V."/>
            <person name="Moseley J."/>
            <person name="Napoli C."/>
            <person name="Nedelcu A.M."/>
            <person name="Niyogi K."/>
            <person name="Novoselov S.V."/>
            <person name="Paulsen I.T."/>
            <person name="Pazour G.J."/>
            <person name="Purton S."/>
            <person name="Ral J.P."/>
            <person name="Riano-Pachon D.M."/>
            <person name="Riekhof W."/>
            <person name="Rymarquis L."/>
            <person name="Schroda M."/>
            <person name="Stern D."/>
            <person name="Umen J."/>
            <person name="Willows R."/>
            <person name="Wilson N."/>
            <person name="Zimmer S.L."/>
            <person name="Allmer J."/>
            <person name="Balk J."/>
            <person name="Bisova K."/>
            <person name="Chen C.J."/>
            <person name="Elias M."/>
            <person name="Gendler K."/>
            <person name="Hauser C."/>
            <person name="Lamb M.R."/>
            <person name="Ledford H."/>
            <person name="Long J.C."/>
            <person name="Minagawa J."/>
            <person name="Page M.D."/>
            <person name="Pan J."/>
            <person name="Pootakham W."/>
            <person name="Roje S."/>
            <person name="Rose A."/>
            <person name="Stahlberg E."/>
            <person name="Terauchi A.M."/>
            <person name="Yang P."/>
            <person name="Ball S."/>
            <person name="Bowler C."/>
            <person name="Dieckmann C.L."/>
            <person name="Gladyshev V.N."/>
            <person name="Green P."/>
            <person name="Jorgensen R."/>
            <person name="Mayfield S."/>
            <person name="Mueller-Roeber B."/>
            <person name="Rajamani S."/>
            <person name="Sayre R.T."/>
            <person name="Brokstein P."/>
            <person name="Dubchak I."/>
            <person name="Goodstein D."/>
            <person name="Hornick L."/>
            <person name="Huang Y.W."/>
            <person name="Jhaveri J."/>
            <person name="Luo Y."/>
            <person name="Martinez D."/>
            <person name="Ngau W.C."/>
            <person name="Otillar B."/>
            <person name="Poliakov A."/>
            <person name="Porter A."/>
            <person name="Szajkowski L."/>
            <person name="Werner G."/>
            <person name="Zhou K."/>
            <person name="Grigoriev I.V."/>
            <person name="Rokhsar D.S."/>
            <person name="Grossman A.R."/>
        </authorList>
    </citation>
    <scope>NUCLEOTIDE SEQUENCE [LARGE SCALE GENOMIC DNA]</scope>
    <source>
        <strain>CC-503</strain>
    </source>
</reference>
<reference key="2">
    <citation type="journal article" date="2013" name="Mol. Biol. Cell">
        <title>The N-DRC forms a conserved biochemical complex that maintains outer doublet alignment and limits microtubule sliding in motile axonemes.</title>
        <authorList>
            <person name="Bower R."/>
            <person name="Tritschler D."/>
            <person name="Vanderwaal K."/>
            <person name="Perrone C.A."/>
            <person name="Mueller J."/>
            <person name="Fox L."/>
            <person name="Sale W.S."/>
            <person name="Porter M.E."/>
        </authorList>
    </citation>
    <scope>FUNCTION</scope>
    <scope>SUBUNIT</scope>
    <scope>SUBCELLULAR LOCATION</scope>
    <scope>IDENTIFICATION BY MASS SPECTROMETRY</scope>
</reference>
<reference key="3">
    <citation type="journal article" date="2015" name="Mol. Biol. Cell">
        <title>Detailed structural and biochemical characterization of the nexin-dynein regulatory complex.</title>
        <authorList>
            <person name="Oda T."/>
            <person name="Yanagisawa H."/>
            <person name="Kikkawa M."/>
        </authorList>
    </citation>
    <scope>FUNCTION</scope>
    <scope>SUBUNIT</scope>
    <scope>SUBCELLULAR LOCATION</scope>
</reference>
<accession>A8HQ54</accession>